<dbReference type="EC" id="2.4.1.122" evidence="4"/>
<dbReference type="EMBL" id="BC073496">
    <property type="protein sequence ID" value="AAH73496.1"/>
    <property type="molecule type" value="mRNA"/>
</dbReference>
<dbReference type="RefSeq" id="NP_001085899.1">
    <property type="nucleotide sequence ID" value="NM_001092430.1"/>
</dbReference>
<dbReference type="SMR" id="Q6GNL1"/>
<dbReference type="CAZy" id="GT31">
    <property type="family name" value="Glycosyltransferase Family 31"/>
</dbReference>
<dbReference type="GlyCosmos" id="Q6GNL1">
    <property type="glycosylation" value="4 sites, No reported glycans"/>
</dbReference>
<dbReference type="DNASU" id="444326"/>
<dbReference type="GeneID" id="444326"/>
<dbReference type="KEGG" id="xla:444326"/>
<dbReference type="AGR" id="Xenbase:XB-GENE-5871035"/>
<dbReference type="CTD" id="444326"/>
<dbReference type="Xenbase" id="XB-GENE-5871035">
    <property type="gene designation" value="XB5871033.L"/>
</dbReference>
<dbReference type="OrthoDB" id="414175at2759"/>
<dbReference type="UniPathway" id="UPA00378"/>
<dbReference type="Proteomes" id="UP000186698">
    <property type="component" value="Chromosome 2L"/>
</dbReference>
<dbReference type="Bgee" id="444326">
    <property type="expression patterns" value="Expressed in stomach and 7 other cell types or tissues"/>
</dbReference>
<dbReference type="GO" id="GO:0016020">
    <property type="term" value="C:membrane"/>
    <property type="evidence" value="ECO:0000250"/>
    <property type="project" value="UniProtKB"/>
</dbReference>
<dbReference type="GO" id="GO:0016263">
    <property type="term" value="F:glycoprotein-N-acetylgalactosamine 3-beta-galactosyltransferase activity"/>
    <property type="evidence" value="ECO:0000250"/>
    <property type="project" value="UniProtKB"/>
</dbReference>
<dbReference type="GO" id="GO:0046872">
    <property type="term" value="F:metal ion binding"/>
    <property type="evidence" value="ECO:0007669"/>
    <property type="project" value="UniProtKB-KW"/>
</dbReference>
<dbReference type="GO" id="GO:0000166">
    <property type="term" value="F:nucleotide binding"/>
    <property type="evidence" value="ECO:0007669"/>
    <property type="project" value="UniProtKB-KW"/>
</dbReference>
<dbReference type="GO" id="GO:0001525">
    <property type="term" value="P:angiogenesis"/>
    <property type="evidence" value="ECO:0000250"/>
    <property type="project" value="UniProtKB"/>
</dbReference>
<dbReference type="GO" id="GO:0016267">
    <property type="term" value="P:core 1 O-glycan biosynthetic process"/>
    <property type="evidence" value="ECO:0007669"/>
    <property type="project" value="TreeGrafter"/>
</dbReference>
<dbReference type="GO" id="GO:0001822">
    <property type="term" value="P:kidney development"/>
    <property type="evidence" value="ECO:0000250"/>
    <property type="project" value="UniProtKB"/>
</dbReference>
<dbReference type="FunFam" id="3.90.550.50:FF:000007">
    <property type="entry name" value="Glycoprotein-N-acetylgalactosamine 3-beta-galactosyltransferase 1"/>
    <property type="match status" value="1"/>
</dbReference>
<dbReference type="Gene3D" id="3.90.550.50">
    <property type="match status" value="1"/>
</dbReference>
<dbReference type="InterPro" id="IPR026050">
    <property type="entry name" value="C1GALT1/C1GALT1_chp1"/>
</dbReference>
<dbReference type="InterPro" id="IPR003378">
    <property type="entry name" value="Fringe-like_glycosylTrfase"/>
</dbReference>
<dbReference type="PANTHER" id="PTHR23033">
    <property type="entry name" value="BETA1,3-GALACTOSYLTRANSFERASE"/>
    <property type="match status" value="1"/>
</dbReference>
<dbReference type="PANTHER" id="PTHR23033:SF51">
    <property type="entry name" value="GLYCOPROTEIN-N-ACETYLGALACTOSAMINE 3-BETA-GALACTOSYLTRANSFERASE 1"/>
    <property type="match status" value="1"/>
</dbReference>
<dbReference type="Pfam" id="PF02434">
    <property type="entry name" value="Fringe"/>
    <property type="match status" value="1"/>
</dbReference>
<reference key="1">
    <citation type="submission" date="2004-06" db="EMBL/GenBank/DDBJ databases">
        <authorList>
            <consortium name="NIH - Xenopus Gene Collection (XGC) project"/>
        </authorList>
    </citation>
    <scope>NUCLEOTIDE SEQUENCE [LARGE SCALE MRNA]</scope>
    <source>
        <tissue>Embryo</tissue>
    </source>
</reference>
<accession>Q6GNL1</accession>
<comment type="function">
    <text evidence="4">Glycosyltransferase that generates the core 1 O-glycan Gal-beta1-3GalNAc-alpha1-Ser/Thr (T antigen), which is a precursor for many extended O-glycans in glycoproteins.</text>
</comment>
<comment type="catalytic activity">
    <reaction evidence="4">
        <text>an N-acetyl-alpha-D-galactosaminyl derivative + UDP-alpha-D-galactose = a beta-D-galactosyl-(1-&gt;3)-N-acetyl-alpha-D-galactosaminyl derivative + UDP + H(+)</text>
        <dbReference type="Rhea" id="RHEA:15621"/>
        <dbReference type="ChEBI" id="CHEBI:15378"/>
        <dbReference type="ChEBI" id="CHEBI:28257"/>
        <dbReference type="ChEBI" id="CHEBI:58223"/>
        <dbReference type="ChEBI" id="CHEBI:66914"/>
        <dbReference type="ChEBI" id="CHEBI:133470"/>
        <dbReference type="EC" id="2.4.1.122"/>
    </reaction>
</comment>
<comment type="cofactor">
    <cofactor evidence="3">
        <name>Mn(2+)</name>
        <dbReference type="ChEBI" id="CHEBI:29035"/>
    </cofactor>
</comment>
<comment type="pathway">
    <text evidence="4">Protein modification; protein glycosylation.</text>
</comment>
<comment type="subunit">
    <text evidence="3">Homodimer; disulfide-linked.</text>
</comment>
<comment type="subcellular location">
    <subcellularLocation>
        <location evidence="3">Membrane</location>
        <topology evidence="1">Single-pass type II membrane protein</topology>
    </subcellularLocation>
</comment>
<comment type="similarity">
    <text evidence="6">Belongs to the glycosyltransferase 31 family. Beta3-Gal-T subfamily.</text>
</comment>
<keyword id="KW-1015">Disulfide bond</keyword>
<keyword id="KW-0325">Glycoprotein</keyword>
<keyword id="KW-0328">Glycosyltransferase</keyword>
<keyword id="KW-0464">Manganese</keyword>
<keyword id="KW-0472">Membrane</keyword>
<keyword id="KW-0479">Metal-binding</keyword>
<keyword id="KW-0547">Nucleotide-binding</keyword>
<keyword id="KW-1185">Reference proteome</keyword>
<keyword id="KW-0735">Signal-anchor</keyword>
<keyword id="KW-0808">Transferase</keyword>
<keyword id="KW-0812">Transmembrane</keyword>
<keyword id="KW-1133">Transmembrane helix</keyword>
<protein>
    <recommendedName>
        <fullName>Glycoprotein-N-acetylgalactosamine 3-beta-galactosyltransferase 1</fullName>
        <ecNumber evidence="4">2.4.1.122</ecNumber>
    </recommendedName>
    <alternativeName>
        <fullName>Core 1 O-glycan T-synthase</fullName>
    </alternativeName>
    <alternativeName>
        <fullName>Core 1 UDP-galactose:N-acetylgalactosamine-alpha-R beta 1,3-galactosyltransferase 1</fullName>
    </alternativeName>
    <alternativeName>
        <fullName>Core 1 beta1,3-galactosyltransferase 1</fullName>
        <shortName>C1GalT1</shortName>
        <shortName>Core 1 beta3-Gal-T1</shortName>
    </alternativeName>
</protein>
<sequence>MSIICAKVAWLPLTLGTAMGFLITFYLARTLLERNSQPPLALRSWNNMELLPEVGMSHFHLPEDNSVSEELSKKVRVLCWIMTGPTNLKTKAIHVKNSWTRHCNVALFMSSITDEDFPAIGLGTGEGRDKLYWKTIRAFHYAHKYYLNETEWFFKADDDTYVIMDNLRWMLSNYTADQPIYFGKRFKPYIKQGYMSGGAGYVLSREALIRFVEGFRTGVCKHTTSTEDVAIGNCMQLMGVIAGDSRDTEKRETFHPFPPEHHLTMKFSESKSFWYWSYCVYPIVEGPQCCSDLAISFHYISPEDMYTLEYFIYHLRAHGYQYRYQPPLSDNADNLPVYIENETVKPNRTISDFLEPPMES</sequence>
<organism>
    <name type="scientific">Xenopus laevis</name>
    <name type="common">African clawed frog</name>
    <dbReference type="NCBI Taxonomy" id="8355"/>
    <lineage>
        <taxon>Eukaryota</taxon>
        <taxon>Metazoa</taxon>
        <taxon>Chordata</taxon>
        <taxon>Craniata</taxon>
        <taxon>Vertebrata</taxon>
        <taxon>Euteleostomi</taxon>
        <taxon>Amphibia</taxon>
        <taxon>Batrachia</taxon>
        <taxon>Anura</taxon>
        <taxon>Pipoidea</taxon>
        <taxon>Pipidae</taxon>
        <taxon>Xenopodinae</taxon>
        <taxon>Xenopus</taxon>
        <taxon>Xenopus</taxon>
    </lineage>
</organism>
<feature type="chain" id="PRO_0000285070" description="Glycoprotein-N-acetylgalactosamine 3-beta-galactosyltransferase 1">
    <location>
        <begin position="1"/>
        <end position="360"/>
    </location>
</feature>
<feature type="topological domain" description="Cytoplasmic" evidence="5">
    <location>
        <begin position="1"/>
        <end position="7"/>
    </location>
</feature>
<feature type="transmembrane region" description="Helical; Signal-anchor for type II membrane protein" evidence="5">
    <location>
        <begin position="8"/>
        <end position="28"/>
    </location>
</feature>
<feature type="topological domain" description="Lumenal" evidence="5">
    <location>
        <begin position="29"/>
        <end position="360"/>
    </location>
</feature>
<feature type="binding site" evidence="2">
    <location>
        <position position="82"/>
    </location>
    <ligand>
        <name>UDP</name>
        <dbReference type="ChEBI" id="CHEBI:58223"/>
    </ligand>
</feature>
<feature type="binding site" evidence="2">
    <location>
        <position position="126"/>
    </location>
    <ligand>
        <name>UDP</name>
        <dbReference type="ChEBI" id="CHEBI:58223"/>
    </ligand>
</feature>
<feature type="binding site" evidence="2">
    <location>
        <position position="127"/>
    </location>
    <ligand>
        <name>UDP</name>
        <dbReference type="ChEBI" id="CHEBI:58223"/>
    </ligand>
</feature>
<feature type="binding site" evidence="2">
    <location>
        <position position="128"/>
    </location>
    <ligand>
        <name>UDP</name>
        <dbReference type="ChEBI" id="CHEBI:58223"/>
    </ligand>
</feature>
<feature type="binding site" evidence="2">
    <location>
        <position position="134"/>
    </location>
    <ligand>
        <name>UDP</name>
        <dbReference type="ChEBI" id="CHEBI:58223"/>
    </ligand>
</feature>
<feature type="binding site" evidence="2">
    <location>
        <position position="157"/>
    </location>
    <ligand>
        <name>Mn(2+)</name>
        <dbReference type="ChEBI" id="CHEBI:29035"/>
    </ligand>
</feature>
<feature type="binding site" evidence="2">
    <location>
        <position position="157"/>
    </location>
    <ligand>
        <name>UDP</name>
        <dbReference type="ChEBI" id="CHEBI:58223"/>
    </ligand>
</feature>
<feature type="binding site" evidence="2">
    <location>
        <position position="159"/>
    </location>
    <ligand>
        <name>Mn(2+)</name>
        <dbReference type="ChEBI" id="CHEBI:29035"/>
    </ligand>
</feature>
<feature type="binding site" evidence="2">
    <location>
        <position position="274"/>
    </location>
    <ligand>
        <name>a glycoprotein</name>
        <dbReference type="ChEBI" id="CHEBI:17089"/>
    </ligand>
</feature>
<feature type="binding site" evidence="2">
    <location>
        <position position="298"/>
    </location>
    <ligand>
        <name>Mn(2+)</name>
        <dbReference type="ChEBI" id="CHEBI:29035"/>
    </ligand>
</feature>
<feature type="binding site" evidence="2">
    <location>
        <position position="298"/>
    </location>
    <ligand>
        <name>UDP</name>
        <dbReference type="ChEBI" id="CHEBI:58223"/>
    </ligand>
</feature>
<feature type="binding site" evidence="2">
    <location>
        <position position="299"/>
    </location>
    <ligand>
        <name>UDP</name>
        <dbReference type="ChEBI" id="CHEBI:58223"/>
    </ligand>
</feature>
<feature type="glycosylation site" description="N-linked (GlcNAc...) asparagine" evidence="5">
    <location>
        <position position="148"/>
    </location>
</feature>
<feature type="glycosylation site" description="N-linked (GlcNAc...) asparagine" evidence="5">
    <location>
        <position position="173"/>
    </location>
</feature>
<feature type="glycosylation site" description="N-linked (GlcNAc...) asparagine" evidence="5">
    <location>
        <position position="341"/>
    </location>
</feature>
<feature type="glycosylation site" description="N-linked (GlcNAc...) asparagine" evidence="5">
    <location>
        <position position="347"/>
    </location>
</feature>
<feature type="disulfide bond" evidence="2">
    <location>
        <begin position="79"/>
        <end position="103"/>
    </location>
</feature>
<feature type="disulfide bond" evidence="2">
    <location>
        <begin position="220"/>
        <end position="234"/>
    </location>
</feature>
<feature type="disulfide bond" evidence="2">
    <location>
        <begin position="289"/>
        <end position="290"/>
    </location>
</feature>
<name>C1GLT_XENLA</name>
<evidence type="ECO:0000250" key="1"/>
<evidence type="ECO:0000250" key="2">
    <source>
        <dbReference type="UniProtKB" id="Q7K237"/>
    </source>
</evidence>
<evidence type="ECO:0000250" key="3">
    <source>
        <dbReference type="UniProtKB" id="Q9JJ05"/>
    </source>
</evidence>
<evidence type="ECO:0000250" key="4">
    <source>
        <dbReference type="UniProtKB" id="Q9NS00"/>
    </source>
</evidence>
<evidence type="ECO:0000255" key="5"/>
<evidence type="ECO:0000305" key="6"/>
<proteinExistence type="evidence at transcript level"/>
<gene>
    <name type="primary">c1galt1</name>
</gene>